<keyword id="KW-0158">Chromosome</keyword>
<keyword id="KW-0238">DNA-binding</keyword>
<keyword id="KW-0544">Nucleosome core</keyword>
<keyword id="KW-0539">Nucleus</keyword>
<proteinExistence type="inferred from homology"/>
<protein>
    <recommendedName>
        <fullName>Histone H4</fullName>
    </recommendedName>
</protein>
<evidence type="ECO:0000250" key="1"/>
<evidence type="ECO:0000256" key="2">
    <source>
        <dbReference type="SAM" id="MobiDB-lite"/>
    </source>
</evidence>
<evidence type="ECO:0000305" key="3"/>
<feature type="initiator methionine" description="Removed" evidence="3">
    <location>
        <position position="1"/>
    </location>
</feature>
<feature type="chain" id="PRO_0000158363" description="Histone H4">
    <location>
        <begin position="2"/>
        <end position="104"/>
    </location>
</feature>
<feature type="region of interest" description="Disordered" evidence="2">
    <location>
        <begin position="1"/>
        <end position="21"/>
    </location>
</feature>
<comment type="function">
    <text>Core component of nucleosome. Nucleosomes wrap and compact DNA into chromatin, limiting DNA accessibility to the cellular machineries which require DNA as a template. Histones thereby play a central role in transcription regulation, DNA repair, DNA replication and chromosomal stability. DNA accessibility is regulated via a complex set of post-translational modifications of histones, also called histone code, and nucleosome remodeling.</text>
</comment>
<comment type="subunit">
    <text>The nucleosome is a histone octamer containing two molecules each of H2A, H2B, H3 and H4 assembled in one H3-H4 heterotetramer and two H2A-H2B heterodimers. The octamer wraps approximately 147 bp of DNA.</text>
</comment>
<comment type="subcellular location">
    <subcellularLocation>
        <location evidence="1">Nucleus</location>
    </subcellularLocation>
    <subcellularLocation>
        <location evidence="1">Chromosome</location>
    </subcellularLocation>
</comment>
<comment type="similarity">
    <text evidence="3">Belongs to the histone H4 family.</text>
</comment>
<name>H4_STYLE</name>
<organism>
    <name type="scientific">Stylonychia lemnae</name>
    <name type="common">Ciliate</name>
    <dbReference type="NCBI Taxonomy" id="5949"/>
    <lineage>
        <taxon>Eukaryota</taxon>
        <taxon>Sar</taxon>
        <taxon>Alveolata</taxon>
        <taxon>Ciliophora</taxon>
        <taxon>Intramacronucleata</taxon>
        <taxon>Spirotrichea</taxon>
        <taxon>Stichotrichia</taxon>
        <taxon>Sporadotrichida</taxon>
        <taxon>Oxytrichidae</taxon>
        <taxon>Stylonychinae</taxon>
        <taxon>Stylonychia</taxon>
    </lineage>
</organism>
<accession>P62791</accession>
<accession>P18836</accession>
<reference key="1">
    <citation type="journal article" date="1990" name="DNA Seq.">
        <title>The two macronuclear histone H4 genes of the hypotrichous ciliate Stylonychia lemnae.</title>
        <authorList>
            <person name="Wefes I."/>
            <person name="Lipps H.J."/>
        </authorList>
    </citation>
    <scope>NUCLEOTIDE SEQUENCE [GENOMIC DNA]</scope>
    <source>
        <strain>EK16Sp</strain>
    </source>
</reference>
<sequence length="104" mass="11624">MAGRGKVGKGYGKVGAKRHTKKSLKETIMGITKPAIRRLARRGGVKRISSLIYEETRNVLRSFLENVIRDSVTYTEHAKRKTVTALDVVYALKRQGRTLYGFGG</sequence>
<dbReference type="EMBL" id="X16018">
    <property type="protein sequence ID" value="CAA34151.1"/>
    <property type="molecule type" value="Genomic_DNA"/>
</dbReference>
<dbReference type="EMBL" id="X16019">
    <property type="protein sequence ID" value="CAA34152.1"/>
    <property type="molecule type" value="Genomic_DNA"/>
</dbReference>
<dbReference type="PIR" id="S14184">
    <property type="entry name" value="S14184"/>
</dbReference>
<dbReference type="PIR" id="S14185">
    <property type="entry name" value="S14185"/>
</dbReference>
<dbReference type="SMR" id="P62791"/>
<dbReference type="OrthoDB" id="306905at2759"/>
<dbReference type="GO" id="GO:0000786">
    <property type="term" value="C:nucleosome"/>
    <property type="evidence" value="ECO:0007669"/>
    <property type="project" value="UniProtKB-KW"/>
</dbReference>
<dbReference type="GO" id="GO:0005634">
    <property type="term" value="C:nucleus"/>
    <property type="evidence" value="ECO:0007669"/>
    <property type="project" value="UniProtKB-SubCell"/>
</dbReference>
<dbReference type="GO" id="GO:0003677">
    <property type="term" value="F:DNA binding"/>
    <property type="evidence" value="ECO:0007669"/>
    <property type="project" value="UniProtKB-KW"/>
</dbReference>
<dbReference type="GO" id="GO:0046982">
    <property type="term" value="F:protein heterodimerization activity"/>
    <property type="evidence" value="ECO:0007669"/>
    <property type="project" value="InterPro"/>
</dbReference>
<dbReference type="GO" id="GO:0030527">
    <property type="term" value="F:structural constituent of chromatin"/>
    <property type="evidence" value="ECO:0007669"/>
    <property type="project" value="InterPro"/>
</dbReference>
<dbReference type="CDD" id="cd22912">
    <property type="entry name" value="HFD_H4"/>
    <property type="match status" value="1"/>
</dbReference>
<dbReference type="FunFam" id="1.10.20.10:FF:000012">
    <property type="entry name" value="Histone H4"/>
    <property type="match status" value="1"/>
</dbReference>
<dbReference type="Gene3D" id="1.10.20.10">
    <property type="entry name" value="Histone, subunit A"/>
    <property type="match status" value="1"/>
</dbReference>
<dbReference type="InterPro" id="IPR035425">
    <property type="entry name" value="CENP-T/H4_C"/>
</dbReference>
<dbReference type="InterPro" id="IPR009072">
    <property type="entry name" value="Histone-fold"/>
</dbReference>
<dbReference type="InterPro" id="IPR001951">
    <property type="entry name" value="Histone_H4"/>
</dbReference>
<dbReference type="InterPro" id="IPR019809">
    <property type="entry name" value="Histone_H4_CS"/>
</dbReference>
<dbReference type="PANTHER" id="PTHR10484">
    <property type="entry name" value="HISTONE H4"/>
    <property type="match status" value="1"/>
</dbReference>
<dbReference type="Pfam" id="PF15511">
    <property type="entry name" value="CENP-T_C"/>
    <property type="match status" value="1"/>
</dbReference>
<dbReference type="PRINTS" id="PR00623">
    <property type="entry name" value="HISTONEH4"/>
</dbReference>
<dbReference type="SMART" id="SM00417">
    <property type="entry name" value="H4"/>
    <property type="match status" value="1"/>
</dbReference>
<dbReference type="SUPFAM" id="SSF47113">
    <property type="entry name" value="Histone-fold"/>
    <property type="match status" value="1"/>
</dbReference>
<dbReference type="PROSITE" id="PS00047">
    <property type="entry name" value="HISTONE_H4"/>
    <property type="match status" value="1"/>
</dbReference>